<name>BEGIN_HUMAN</name>
<dbReference type="EMBL" id="BC002607">
    <property type="protein sequence ID" value="AAH02607.1"/>
    <property type="molecule type" value="mRNA"/>
</dbReference>
<dbReference type="EMBL" id="AB040879">
    <property type="protein sequence ID" value="BAA95970.1"/>
    <property type="status" value="ALT_INIT"/>
    <property type="molecule type" value="mRNA"/>
</dbReference>
<dbReference type="EMBL" id="AL390162">
    <property type="protein sequence ID" value="CAB99094.1"/>
    <property type="molecule type" value="mRNA"/>
</dbReference>
<dbReference type="CCDS" id="CCDS9962.1"/>
<dbReference type="PIR" id="T51877">
    <property type="entry name" value="T51877"/>
</dbReference>
<dbReference type="RefSeq" id="NP_001153003.1">
    <property type="nucleotide sequence ID" value="NM_001159531.2"/>
</dbReference>
<dbReference type="RefSeq" id="NP_001372011.1">
    <property type="nucleotide sequence ID" value="NM_001385082.1"/>
</dbReference>
<dbReference type="RefSeq" id="NP_001372012.1">
    <property type="nucleotide sequence ID" value="NM_001385083.1"/>
</dbReference>
<dbReference type="RefSeq" id="NP_001372013.1">
    <property type="nucleotide sequence ID" value="NM_001385084.1"/>
</dbReference>
<dbReference type="RefSeq" id="NP_065887.1">
    <property type="nucleotide sequence ID" value="NM_020836.4"/>
</dbReference>
<dbReference type="RefSeq" id="XP_005267978.1">
    <property type="nucleotide sequence ID" value="XM_005267921.3"/>
</dbReference>
<dbReference type="RefSeq" id="XP_016877010.1">
    <property type="nucleotide sequence ID" value="XM_017021521.1"/>
</dbReference>
<dbReference type="SMR" id="Q9BUH8"/>
<dbReference type="BioGRID" id="121647">
    <property type="interactions" value="63"/>
</dbReference>
<dbReference type="FunCoup" id="Q9BUH8">
    <property type="interactions" value="259"/>
</dbReference>
<dbReference type="IntAct" id="Q9BUH8">
    <property type="interactions" value="64"/>
</dbReference>
<dbReference type="MINT" id="Q9BUH8"/>
<dbReference type="STRING" id="9606.ENSP00000411124"/>
<dbReference type="iPTMnet" id="Q9BUH8"/>
<dbReference type="PhosphoSitePlus" id="Q9BUH8"/>
<dbReference type="BioMuta" id="BEGAIN"/>
<dbReference type="DMDM" id="62511244"/>
<dbReference type="jPOST" id="Q9BUH8"/>
<dbReference type="MassIVE" id="Q9BUH8"/>
<dbReference type="PaxDb" id="9606-ENSP00000411124"/>
<dbReference type="PeptideAtlas" id="Q9BUH8"/>
<dbReference type="ProteomicsDB" id="79087"/>
<dbReference type="Pumba" id="Q9BUH8"/>
<dbReference type="Antibodypedia" id="146">
    <property type="antibodies" value="173 antibodies from 27 providers"/>
</dbReference>
<dbReference type="DNASU" id="57596"/>
<dbReference type="Ensembl" id="ENST00000355173.7">
    <property type="protein sequence ID" value="ENSP00000347301.2"/>
    <property type="gene ID" value="ENSG00000183092.18"/>
</dbReference>
<dbReference type="Ensembl" id="ENST00000553553.6">
    <property type="protein sequence ID" value="ENSP00000451397.2"/>
    <property type="gene ID" value="ENSG00000183092.18"/>
</dbReference>
<dbReference type="Ensembl" id="ENST00000556188.6">
    <property type="protein sequence ID" value="ENSP00000452157.2"/>
    <property type="gene ID" value="ENSG00000183092.18"/>
</dbReference>
<dbReference type="Ensembl" id="ENST00000557378.6">
    <property type="protein sequence ID" value="ENSP00000450722.2"/>
    <property type="gene ID" value="ENSG00000183092.18"/>
</dbReference>
<dbReference type="GeneID" id="57596"/>
<dbReference type="KEGG" id="hsa:57596"/>
<dbReference type="UCSC" id="uc001yhq.4">
    <property type="organism name" value="human"/>
</dbReference>
<dbReference type="AGR" id="HGNC:24163"/>
<dbReference type="CTD" id="57596"/>
<dbReference type="DisGeNET" id="57596"/>
<dbReference type="GeneCards" id="BEGAIN"/>
<dbReference type="HGNC" id="HGNC:24163">
    <property type="gene designation" value="BEGAIN"/>
</dbReference>
<dbReference type="HPA" id="ENSG00000183092">
    <property type="expression patterns" value="Group enriched (brain, pancreas, pituitary gland)"/>
</dbReference>
<dbReference type="MIM" id="618597">
    <property type="type" value="gene"/>
</dbReference>
<dbReference type="neXtProt" id="NX_Q9BUH8"/>
<dbReference type="OpenTargets" id="ENSG00000183092"/>
<dbReference type="PharmGKB" id="PA162377453"/>
<dbReference type="VEuPathDB" id="HostDB:ENSG00000183092"/>
<dbReference type="eggNOG" id="ENOG502QUGW">
    <property type="taxonomic scope" value="Eukaryota"/>
</dbReference>
<dbReference type="GeneTree" id="ENSGT00940000161760"/>
<dbReference type="HOGENOM" id="CLU_020017_1_1_1"/>
<dbReference type="InParanoid" id="Q9BUH8"/>
<dbReference type="OrthoDB" id="9217007at2759"/>
<dbReference type="PAN-GO" id="Q9BUH8">
    <property type="GO annotations" value="2 GO annotations based on evolutionary models"/>
</dbReference>
<dbReference type="PhylomeDB" id="Q9BUH8"/>
<dbReference type="TreeFam" id="TF331612"/>
<dbReference type="PathwayCommons" id="Q9BUH8"/>
<dbReference type="Reactome" id="R-HSA-6794361">
    <property type="pathway name" value="Neurexins and neuroligins"/>
</dbReference>
<dbReference type="SignaLink" id="Q9BUH8"/>
<dbReference type="BioGRID-ORCS" id="57596">
    <property type="hits" value="13 hits in 1145 CRISPR screens"/>
</dbReference>
<dbReference type="CD-CODE" id="FB4E32DD">
    <property type="entry name" value="Presynaptic clusters and postsynaptic densities"/>
</dbReference>
<dbReference type="ChiTaRS" id="BEGAIN">
    <property type="organism name" value="human"/>
</dbReference>
<dbReference type="GeneWiki" id="BEGAIN"/>
<dbReference type="GenomeRNAi" id="57596"/>
<dbReference type="Pharos" id="Q9BUH8">
    <property type="development level" value="Tbio"/>
</dbReference>
<dbReference type="PRO" id="PR:Q9BUH8"/>
<dbReference type="Proteomes" id="UP000005640">
    <property type="component" value="Chromosome 14"/>
</dbReference>
<dbReference type="RNAct" id="Q9BUH8">
    <property type="molecule type" value="protein"/>
</dbReference>
<dbReference type="Bgee" id="ENSG00000183092">
    <property type="expression patterns" value="Expressed in right hemisphere of cerebellum and 112 other cell types or tissues"/>
</dbReference>
<dbReference type="ExpressionAtlas" id="Q9BUH8">
    <property type="expression patterns" value="baseline and differential"/>
</dbReference>
<dbReference type="GO" id="GO:0005737">
    <property type="term" value="C:cytoplasm"/>
    <property type="evidence" value="ECO:0007669"/>
    <property type="project" value="UniProtKB-SubCell"/>
</dbReference>
<dbReference type="GO" id="GO:0016020">
    <property type="term" value="C:membrane"/>
    <property type="evidence" value="ECO:0007669"/>
    <property type="project" value="UniProtKB-SubCell"/>
</dbReference>
<dbReference type="GO" id="GO:0098794">
    <property type="term" value="C:postsynapse"/>
    <property type="evidence" value="ECO:0007669"/>
    <property type="project" value="GOC"/>
</dbReference>
<dbReference type="GO" id="GO:0045202">
    <property type="term" value="C:synapse"/>
    <property type="evidence" value="ECO:0000318"/>
    <property type="project" value="GO_Central"/>
</dbReference>
<dbReference type="GO" id="GO:0098817">
    <property type="term" value="P:evoked excitatory postsynaptic potential"/>
    <property type="evidence" value="ECO:0000318"/>
    <property type="project" value="GO_Central"/>
</dbReference>
<dbReference type="InterPro" id="IPR043441">
    <property type="entry name" value="Tjap1/BEGAIN"/>
</dbReference>
<dbReference type="PANTHER" id="PTHR28664:SF2">
    <property type="entry name" value="BRAIN-ENRICHED GUANYLATE KINASE-ASSOCIATED PROTEIN"/>
    <property type="match status" value="1"/>
</dbReference>
<dbReference type="PANTHER" id="PTHR28664">
    <property type="entry name" value="TIGHT JUNCTION-ASSOCIATED PROTEIN 1"/>
    <property type="match status" value="1"/>
</dbReference>
<feature type="chain" id="PRO_0000064904" description="Brain-enriched guanylate kinase-associated protein">
    <location>
        <begin position="1"/>
        <end position="593"/>
    </location>
</feature>
<feature type="region of interest" description="Disordered" evidence="3">
    <location>
        <begin position="499"/>
        <end position="593"/>
    </location>
</feature>
<feature type="modified residue" description="N-acetylmethionine" evidence="11">
    <location>
        <position position="1"/>
    </location>
</feature>
<feature type="modified residue" description="Phosphotyrosine" evidence="2">
    <location>
        <position position="137"/>
    </location>
</feature>
<feature type="modified residue" description="Phosphoserine" evidence="12">
    <location>
        <position position="200"/>
    </location>
</feature>
<feature type="modified residue" description="Phosphoserine" evidence="2">
    <location>
        <position position="229"/>
    </location>
</feature>
<feature type="modified residue" description="Phosphoserine" evidence="6 7 8 9 10 12">
    <location>
        <position position="246"/>
    </location>
</feature>
<feature type="modified residue" description="Phosphoserine" evidence="2">
    <location>
        <position position="265"/>
    </location>
</feature>
<feature type="modified residue" description="Phosphoserine" evidence="12">
    <location>
        <position position="346"/>
    </location>
</feature>
<feature type="modified residue" description="Phosphoserine" evidence="12">
    <location>
        <position position="373"/>
    </location>
</feature>
<feature type="modified residue" description="Asymmetric dimethylarginine" evidence="2">
    <location>
        <position position="381"/>
    </location>
</feature>
<feature type="modified residue" description="Phosphoserine" evidence="12">
    <location>
        <position position="455"/>
    </location>
</feature>
<feature type="modified residue" description="Phosphoserine" evidence="8 12">
    <location>
        <position position="465"/>
    </location>
</feature>
<feature type="modified residue" description="Phosphoserine" evidence="2">
    <location>
        <position position="475"/>
    </location>
</feature>
<feature type="modified residue" description="Phosphoserine" evidence="2">
    <location>
        <position position="477"/>
    </location>
</feature>
<feature type="modified residue" description="Phosphoserine" evidence="10">
    <location>
        <position position="500"/>
    </location>
</feature>
<feature type="modified residue" description="Phosphoserine" evidence="5 8 10 12">
    <location>
        <position position="502"/>
    </location>
</feature>
<feature type="modified residue" description="Phosphoserine" evidence="12">
    <location>
        <position position="506"/>
    </location>
</feature>
<feature type="modified residue" description="Phosphoserine" evidence="12">
    <location>
        <position position="553"/>
    </location>
</feature>
<feature type="modified residue" description="Phosphoserine" evidence="10 12">
    <location>
        <position position="563"/>
    </location>
</feature>
<reference key="1">
    <citation type="journal article" date="2004" name="Genome Res.">
        <title>The status, quality, and expansion of the NIH full-length cDNA project: the Mammalian Gene Collection (MGC).</title>
        <authorList>
            <consortium name="The MGC Project Team"/>
        </authorList>
    </citation>
    <scope>NUCLEOTIDE SEQUENCE [LARGE SCALE MRNA]</scope>
    <source>
        <tissue>Brain</tissue>
    </source>
</reference>
<reference key="2">
    <citation type="journal article" date="2000" name="DNA Res.">
        <title>Prediction of the coding sequences of unidentified human genes. XVII. The complete sequences of 100 new cDNA clones from brain which code for large proteins in vitro.</title>
        <authorList>
            <person name="Nagase T."/>
            <person name="Kikuno R."/>
            <person name="Ishikawa K."/>
            <person name="Hirosawa M."/>
            <person name="Ohara O."/>
        </authorList>
    </citation>
    <scope>NUCLEOTIDE SEQUENCE [LARGE SCALE MRNA] OF 5-593</scope>
    <source>
        <tissue>Brain</tissue>
    </source>
</reference>
<reference key="3">
    <citation type="journal article" date="2007" name="BMC Genomics">
        <title>The full-ORF clone resource of the German cDNA consortium.</title>
        <authorList>
            <person name="Bechtel S."/>
            <person name="Rosenfelder H."/>
            <person name="Duda A."/>
            <person name="Schmidt C.P."/>
            <person name="Ernst U."/>
            <person name="Wellenreuther R."/>
            <person name="Mehrle A."/>
            <person name="Schuster C."/>
            <person name="Bahr A."/>
            <person name="Bloecker H."/>
            <person name="Heubner D."/>
            <person name="Hoerlein A."/>
            <person name="Michel G."/>
            <person name="Wedler H."/>
            <person name="Koehrer K."/>
            <person name="Ottenwaelder B."/>
            <person name="Poustka A."/>
            <person name="Wiemann S."/>
            <person name="Schupp I."/>
        </authorList>
    </citation>
    <scope>NUCLEOTIDE SEQUENCE [LARGE SCALE MRNA] OF 549-593</scope>
    <source>
        <tissue>Amygdala</tissue>
    </source>
</reference>
<reference key="4">
    <citation type="journal article" date="2006" name="Cell">
        <title>Global, in vivo, and site-specific phosphorylation dynamics in signaling networks.</title>
        <authorList>
            <person name="Olsen J.V."/>
            <person name="Blagoev B."/>
            <person name="Gnad F."/>
            <person name="Macek B."/>
            <person name="Kumar C."/>
            <person name="Mortensen P."/>
            <person name="Mann M."/>
        </authorList>
    </citation>
    <scope>PHOSPHORYLATION [LARGE SCALE ANALYSIS] AT SER-246</scope>
    <scope>IDENTIFICATION BY MASS SPECTROMETRY [LARGE SCALE ANALYSIS]</scope>
    <source>
        <tissue>Cervix carcinoma</tissue>
    </source>
</reference>
<reference key="5">
    <citation type="journal article" date="2006" name="Nat. Biotechnol.">
        <title>A probability-based approach for high-throughput protein phosphorylation analysis and site localization.</title>
        <authorList>
            <person name="Beausoleil S.A."/>
            <person name="Villen J."/>
            <person name="Gerber S.A."/>
            <person name="Rush J."/>
            <person name="Gygi S.P."/>
        </authorList>
    </citation>
    <scope>PHOSPHORYLATION [LARGE SCALE ANALYSIS] AT SER-502</scope>
    <scope>IDENTIFICATION BY MASS SPECTROMETRY [LARGE SCALE ANALYSIS]</scope>
    <source>
        <tissue>Cervix carcinoma</tissue>
    </source>
</reference>
<reference key="6">
    <citation type="journal article" date="2008" name="J. Proteome Res.">
        <title>Combining protein-based IMAC, peptide-based IMAC, and MudPIT for efficient phosphoproteomic analysis.</title>
        <authorList>
            <person name="Cantin G.T."/>
            <person name="Yi W."/>
            <person name="Lu B."/>
            <person name="Park S.K."/>
            <person name="Xu T."/>
            <person name="Lee J.-D."/>
            <person name="Yates J.R. III"/>
        </authorList>
    </citation>
    <scope>PHOSPHORYLATION [LARGE SCALE ANALYSIS] AT SER-246</scope>
    <scope>IDENTIFICATION BY MASS SPECTROMETRY [LARGE SCALE ANALYSIS]</scope>
    <source>
        <tissue>Cervix carcinoma</tissue>
    </source>
</reference>
<reference key="7">
    <citation type="journal article" date="2008" name="Mol. Cell">
        <title>Kinase-selective enrichment enables quantitative phosphoproteomics of the kinome across the cell cycle.</title>
        <authorList>
            <person name="Daub H."/>
            <person name="Olsen J.V."/>
            <person name="Bairlein M."/>
            <person name="Gnad F."/>
            <person name="Oppermann F.S."/>
            <person name="Korner R."/>
            <person name="Greff Z."/>
            <person name="Keri G."/>
            <person name="Stemmann O."/>
            <person name="Mann M."/>
        </authorList>
    </citation>
    <scope>PHOSPHORYLATION [LARGE SCALE ANALYSIS] AT SER-246</scope>
    <scope>IDENTIFICATION BY MASS SPECTROMETRY [LARGE SCALE ANALYSIS]</scope>
    <source>
        <tissue>Cervix carcinoma</tissue>
    </source>
</reference>
<reference key="8">
    <citation type="journal article" date="2008" name="Proc. Natl. Acad. Sci. U.S.A.">
        <title>A quantitative atlas of mitotic phosphorylation.</title>
        <authorList>
            <person name="Dephoure N."/>
            <person name="Zhou C."/>
            <person name="Villen J."/>
            <person name="Beausoleil S.A."/>
            <person name="Bakalarski C.E."/>
            <person name="Elledge S.J."/>
            <person name="Gygi S.P."/>
        </authorList>
    </citation>
    <scope>PHOSPHORYLATION [LARGE SCALE ANALYSIS] AT SER-246; SER-465 AND SER-502</scope>
    <scope>IDENTIFICATION BY MASS SPECTROMETRY [LARGE SCALE ANALYSIS]</scope>
    <source>
        <tissue>Cervix carcinoma</tissue>
    </source>
</reference>
<reference key="9">
    <citation type="journal article" date="2010" name="Sci. Signal.">
        <title>Quantitative phosphoproteomics reveals widespread full phosphorylation site occupancy during mitosis.</title>
        <authorList>
            <person name="Olsen J.V."/>
            <person name="Vermeulen M."/>
            <person name="Santamaria A."/>
            <person name="Kumar C."/>
            <person name="Miller M.L."/>
            <person name="Jensen L.J."/>
            <person name="Gnad F."/>
            <person name="Cox J."/>
            <person name="Jensen T.S."/>
            <person name="Nigg E.A."/>
            <person name="Brunak S."/>
            <person name="Mann M."/>
        </authorList>
    </citation>
    <scope>PHOSPHORYLATION [LARGE SCALE ANALYSIS] AT SER-246; SER-500; SER-502 AND SER-563</scope>
    <scope>IDENTIFICATION BY MASS SPECTROMETRY [LARGE SCALE ANALYSIS]</scope>
    <source>
        <tissue>Cervix carcinoma</tissue>
    </source>
</reference>
<reference key="10">
    <citation type="journal article" date="2012" name="Proc. Natl. Acad. Sci. U.S.A.">
        <title>N-terminal acetylome analyses and functional insights of the N-terminal acetyltransferase NatB.</title>
        <authorList>
            <person name="Van Damme P."/>
            <person name="Lasa M."/>
            <person name="Polevoda B."/>
            <person name="Gazquez C."/>
            <person name="Elosegui-Artola A."/>
            <person name="Kim D.S."/>
            <person name="De Juan-Pardo E."/>
            <person name="Demeyer K."/>
            <person name="Hole K."/>
            <person name="Larrea E."/>
            <person name="Timmerman E."/>
            <person name="Prieto J."/>
            <person name="Arnesen T."/>
            <person name="Sherman F."/>
            <person name="Gevaert K."/>
            <person name="Aldabe R."/>
        </authorList>
    </citation>
    <scope>ACETYLATION [LARGE SCALE ANALYSIS] AT MET-1</scope>
    <scope>IDENTIFICATION BY MASS SPECTROMETRY [LARGE SCALE ANALYSIS]</scope>
</reference>
<reference key="11">
    <citation type="journal article" date="2013" name="J. Proteome Res.">
        <title>Toward a comprehensive characterization of a human cancer cell phosphoproteome.</title>
        <authorList>
            <person name="Zhou H."/>
            <person name="Di Palma S."/>
            <person name="Preisinger C."/>
            <person name="Peng M."/>
            <person name="Polat A.N."/>
            <person name="Heck A.J."/>
            <person name="Mohammed S."/>
        </authorList>
    </citation>
    <scope>PHOSPHORYLATION [LARGE SCALE ANALYSIS] AT SER-200; SER-246; SER-346; SER-373; SER-455; SER-465; SER-502; SER-506; SER-553 AND SER-563</scope>
    <scope>IDENTIFICATION BY MASS SPECTROMETRY [LARGE SCALE ANALYSIS]</scope>
    <source>
        <tissue>Cervix carcinoma</tissue>
        <tissue>Erythroleukemia</tissue>
    </source>
</reference>
<organism>
    <name type="scientific">Homo sapiens</name>
    <name type="common">Human</name>
    <dbReference type="NCBI Taxonomy" id="9606"/>
    <lineage>
        <taxon>Eukaryota</taxon>
        <taxon>Metazoa</taxon>
        <taxon>Chordata</taxon>
        <taxon>Craniata</taxon>
        <taxon>Vertebrata</taxon>
        <taxon>Euteleostomi</taxon>
        <taxon>Mammalia</taxon>
        <taxon>Eutheria</taxon>
        <taxon>Euarchontoglires</taxon>
        <taxon>Primates</taxon>
        <taxon>Haplorrhini</taxon>
        <taxon>Catarrhini</taxon>
        <taxon>Hominidae</taxon>
        <taxon>Homo</taxon>
    </lineage>
</organism>
<protein>
    <recommendedName>
        <fullName>Brain-enriched guanylate kinase-associated protein</fullName>
    </recommendedName>
</protein>
<keyword id="KW-0007">Acetylation</keyword>
<keyword id="KW-0963">Cytoplasm</keyword>
<keyword id="KW-0472">Membrane</keyword>
<keyword id="KW-0488">Methylation</keyword>
<keyword id="KW-0597">Phosphoprotein</keyword>
<keyword id="KW-1267">Proteomics identification</keyword>
<keyword id="KW-1185">Reference proteome</keyword>
<comment type="function">
    <text>May sustain the structure of the postsynaptic density (PSD).</text>
</comment>
<comment type="subunit">
    <text evidence="1">Interacts with DLG4 and DLGAP1 and forms a ternary complex.</text>
</comment>
<comment type="interaction">
    <interactant intactId="EBI-742722">
        <id>Q9BUH8</id>
    </interactant>
    <interactant intactId="EBI-745213">
        <id>P29972</id>
        <label>AQP1</label>
    </interactant>
    <organismsDiffer>false</organismsDiffer>
    <experiments>3</experiments>
</comment>
<comment type="interaction">
    <interactant intactId="EBI-742722">
        <id>Q9BUH8</id>
    </interactant>
    <interactant intactId="EBI-1166928">
        <id>Q8N5M1</id>
        <label>ATPAF2</label>
    </interactant>
    <organismsDiffer>false</organismsDiffer>
    <experiments>5</experiments>
</comment>
<comment type="interaction">
    <interactant intactId="EBI-742722">
        <id>Q9BUH8</id>
    </interactant>
    <interactant intactId="EBI-1035195">
        <id>P18075</id>
        <label>BMP7</label>
    </interactant>
    <organismsDiffer>false</organismsDiffer>
    <experiments>3</experiments>
</comment>
<comment type="interaction">
    <interactant intactId="EBI-742722">
        <id>Q9BUH8</id>
    </interactant>
    <interactant intactId="EBI-396137">
        <id>Q9UJX2</id>
        <label>CDC23</label>
    </interactant>
    <organismsDiffer>false</organismsDiffer>
    <experiments>3</experiments>
</comment>
<comment type="interaction">
    <interactant intactId="EBI-742722">
        <id>Q9BUH8</id>
    </interactant>
    <interactant intactId="EBI-351257">
        <id>P26196</id>
        <label>DDX6</label>
    </interactant>
    <organismsDiffer>false</organismsDiffer>
    <experiments>3</experiments>
</comment>
<comment type="interaction">
    <interactant intactId="EBI-742722">
        <id>Q9BUH8</id>
    </interactant>
    <interactant intactId="EBI-11984733">
        <id>O60941-5</id>
        <label>DTNB</label>
    </interactant>
    <organismsDiffer>false</organismsDiffer>
    <experiments>3</experiments>
</comment>
<comment type="interaction">
    <interactant intactId="EBI-742722">
        <id>Q9BUH8</id>
    </interactant>
    <interactant intactId="EBI-744099">
        <id>Q9H0I2</id>
        <label>ENKD1</label>
    </interactant>
    <organismsDiffer>false</organismsDiffer>
    <experiments>4</experiments>
</comment>
<comment type="interaction">
    <interactant intactId="EBI-742722">
        <id>Q9BUH8</id>
    </interactant>
    <interactant intactId="EBI-719941">
        <id>Q3B820</id>
        <label>FAM161A</label>
    </interactant>
    <organismsDiffer>false</organismsDiffer>
    <experiments>3</experiments>
</comment>
<comment type="interaction">
    <interactant intactId="EBI-742722">
        <id>Q9BUH8</id>
    </interactant>
    <interactant intactId="EBI-6658203">
        <id>Q86YD7</id>
        <label>FAM90A1</label>
    </interactant>
    <organismsDiffer>false</organismsDiffer>
    <experiments>3</experiments>
</comment>
<comment type="interaction">
    <interactant intactId="EBI-742722">
        <id>Q9BUH8</id>
    </interactant>
    <interactant intactId="EBI-744104">
        <id>P55040</id>
        <label>GEM</label>
    </interactant>
    <organismsDiffer>false</organismsDiffer>
    <experiments>5</experiments>
</comment>
<comment type="interaction">
    <interactant intactId="EBI-742722">
        <id>Q9BUH8</id>
    </interactant>
    <interactant intactId="EBI-2548508">
        <id>Q96IK5</id>
        <label>GMCL1</label>
    </interactant>
    <organismsDiffer>false</organismsDiffer>
    <experiments>5</experiments>
</comment>
<comment type="interaction">
    <interactant intactId="EBI-742722">
        <id>Q9BUH8</id>
    </interactant>
    <interactant intactId="EBI-11978177">
        <id>Q96NT3-2</id>
        <label>GUCD1</label>
    </interactant>
    <organismsDiffer>false</organismsDiffer>
    <experiments>3</experiments>
</comment>
<comment type="interaction">
    <interactant intactId="EBI-742722">
        <id>Q9BUH8</id>
    </interactant>
    <interactant intactId="EBI-11953488">
        <id>P56524-2</id>
        <label>HDAC4</label>
    </interactant>
    <organismsDiffer>false</organismsDiffer>
    <experiments>3</experiments>
</comment>
<comment type="interaction">
    <interactant intactId="EBI-742722">
        <id>Q9BUH8</id>
    </interactant>
    <interactant intactId="EBI-14069005">
        <id>Q9BVG8-5</id>
        <label>KIFC3</label>
    </interactant>
    <organismsDiffer>false</organismsDiffer>
    <experiments>3</experiments>
</comment>
<comment type="interaction">
    <interactant intactId="EBI-742722">
        <id>Q9BUH8</id>
    </interactant>
    <interactant intactId="EBI-726510">
        <id>Q96BZ8</id>
        <label>LENG1</label>
    </interactant>
    <organismsDiffer>false</organismsDiffer>
    <experiments>3</experiments>
</comment>
<comment type="interaction">
    <interactant intactId="EBI-742722">
        <id>Q9BUH8</id>
    </interactant>
    <interactant intactId="EBI-10268010">
        <id>Q8N8X9</id>
        <label>MAB21L3</label>
    </interactant>
    <organismsDiffer>false</organismsDiffer>
    <experiments>3</experiments>
</comment>
<comment type="interaction">
    <interactant intactId="EBI-742722">
        <id>Q9BUH8</id>
    </interactant>
    <interactant intactId="EBI-748974">
        <id>Q96CV9</id>
        <label>OPTN</label>
    </interactant>
    <organismsDiffer>false</organismsDiffer>
    <experiments>3</experiments>
</comment>
<comment type="interaction">
    <interactant intactId="EBI-742722">
        <id>Q9BUH8</id>
    </interactant>
    <interactant intactId="EBI-2798416">
        <id>Q99633</id>
        <label>PRPF18</label>
    </interactant>
    <organismsDiffer>false</organismsDiffer>
    <experiments>3</experiments>
</comment>
<comment type="interaction">
    <interactant intactId="EBI-742722">
        <id>Q9BUH8</id>
    </interactant>
    <interactant intactId="EBI-11986293">
        <id>P0CG20</id>
        <label>PRR35</label>
    </interactant>
    <organismsDiffer>false</organismsDiffer>
    <experiments>3</experiments>
</comment>
<comment type="interaction">
    <interactant intactId="EBI-742722">
        <id>Q9BUH8</id>
    </interactant>
    <interactant intactId="EBI-3437896">
        <id>Q86YV0</id>
        <label>RASAL3</label>
    </interactant>
    <organismsDiffer>false</organismsDiffer>
    <experiments>3</experiments>
</comment>
<comment type="interaction">
    <interactant intactId="EBI-742722">
        <id>Q9BUH8</id>
    </interactant>
    <interactant intactId="EBI-971402">
        <id>P28749</id>
        <label>RBL1</label>
    </interactant>
    <organismsDiffer>false</organismsDiffer>
    <experiments>2</experiments>
</comment>
<comment type="interaction">
    <interactant intactId="EBI-742722">
        <id>Q9BUH8</id>
    </interactant>
    <interactant intactId="EBI-3957636">
        <id>Q8IYX7</id>
        <label>SAXO1</label>
    </interactant>
    <organismsDiffer>false</organismsDiffer>
    <experiments>3</experiments>
</comment>
<comment type="interaction">
    <interactant intactId="EBI-742722">
        <id>Q9BUH8</id>
    </interactant>
    <interactant intactId="EBI-740781">
        <id>Q9BT92</id>
        <label>TCHP</label>
    </interactant>
    <organismsDiffer>false</organismsDiffer>
    <experiments>3</experiments>
</comment>
<comment type="interaction">
    <interactant intactId="EBI-742722">
        <id>Q9BUH8</id>
    </interactant>
    <interactant intactId="EBI-3650647">
        <id>Q9BUZ4</id>
        <label>TRAF4</label>
    </interactant>
    <organismsDiffer>false</organismsDiffer>
    <experiments>3</experiments>
</comment>
<comment type="interaction">
    <interactant intactId="EBI-742722">
        <id>Q9BUH8</id>
    </interactant>
    <interactant intactId="EBI-11993110">
        <id>Q9P2F9</id>
        <label>ZNF319</label>
    </interactant>
    <organismsDiffer>false</organismsDiffer>
    <experiments>5</experiments>
</comment>
<comment type="interaction">
    <interactant intactId="EBI-742722">
        <id>Q9BUH8</id>
    </interactant>
    <interactant intactId="EBI-740727">
        <id>Q8TAU3</id>
        <label>ZNF417</label>
    </interactant>
    <organismsDiffer>false</organismsDiffer>
    <experiments>6</experiments>
</comment>
<comment type="interaction">
    <interactant intactId="EBI-742722">
        <id>Q9BUH8</id>
    </interactant>
    <interactant intactId="EBI-10172590">
        <id>Q7Z3I7</id>
        <label>ZNF572</label>
    </interactant>
    <organismsDiffer>false</organismsDiffer>
    <experiments>5</experiments>
</comment>
<comment type="interaction">
    <interactant intactId="EBI-742722">
        <id>Q9BUH8</id>
    </interactant>
    <interactant intactId="EBI-6427977">
        <id>Q96SQ5</id>
        <label>ZNF587</label>
    </interactant>
    <organismsDiffer>false</organismsDiffer>
    <experiments>3</experiments>
</comment>
<comment type="interaction">
    <interactant intactId="EBI-742722">
        <id>Q9BUH8</id>
    </interactant>
    <interactant intactId="EBI-11985915">
        <id>Q5T619</id>
        <label>ZNF648</label>
    </interactant>
    <organismsDiffer>false</organismsDiffer>
    <experiments>5</experiments>
</comment>
<comment type="interaction">
    <interactant intactId="EBI-742722">
        <id>Q9BUH8</id>
    </interactant>
    <interactant intactId="EBI-10251462">
        <id>Q6NX45</id>
        <label>ZNF774</label>
    </interactant>
    <organismsDiffer>false</organismsDiffer>
    <experiments>6</experiments>
</comment>
<comment type="interaction">
    <interactant intactId="EBI-742722">
        <id>Q9BUH8</id>
    </interactant>
    <interactant intactId="EBI-5667516">
        <id>Q9Y2P0</id>
        <label>ZNF835</label>
    </interactant>
    <organismsDiffer>false</organismsDiffer>
    <experiments>3</experiments>
</comment>
<comment type="interaction">
    <interactant intactId="EBI-742722">
        <id>Q9BUH8</id>
    </interactant>
    <interactant intactId="EBI-11962574">
        <id>Q96EG3</id>
        <label>ZNF837</label>
    </interactant>
    <organismsDiffer>false</organismsDiffer>
    <experiments>3</experiments>
</comment>
<comment type="subcellular location">
    <subcellularLocation>
        <location evidence="1">Cytoplasm</location>
    </subcellularLocation>
    <subcellularLocation>
        <location evidence="1">Membrane</location>
        <topology evidence="1">Peripheral membrane protein</topology>
    </subcellularLocation>
</comment>
<comment type="sequence caution" evidence="4">
    <conflict type="erroneous initiation">
        <sequence resource="EMBL-CDS" id="BAA95970"/>
    </conflict>
</comment>
<proteinExistence type="evidence at protein level"/>
<sequence>MEKLSALQEQKGELRKRLSYTTHKLEKLETEFDSTRHYLEIELRRAQEELEKVTEKLRRIQSNYMALQRINQELEDKLYRMGQHYEEEKRALSHEIVALNSHLLEAKVTIDKLSEDNELYRKDCNLAAQLLQCSQTYGRVHKVSELPSDFQERVSLHMEKHGCSLPSPLCHPAYADSVPTCVIAKVLEKPDPASLSSRLSDASARDLAFCDGVEKPGPRPPYKGDIYCSDTALYCPEERRRDRRPSVDAPVTDVGFLRAQNSTDSAAEEEEEAEAAAFPAGFQHEAFPSYAGSLPTSSSYSSFSATSEEKEHAQASTLTASQQAIYLNSRDELFDRKPPATTYEGSPRFAKATAAVAAPLEAEVAPGFGRTMSPYPAETFRFPASPGPQQALMPPNLWSLRAKPGTARLPGEDMRGQWRPLSVEDIGAYSYPVSAAGRASPCSFSERYYGGAGGSPGKKADGRASPLYASYKADSFSEGDDLSQGHLAEPCFLRAGGDLSLSPGRSADPLPGYAPSEGGDGDRLGVQLCGTASSPEPEQGSRDSLEPSSMEASPEMHPAARLSPQQAFPRTGGSGLSRKDSLTKAQLYGTLLN</sequence>
<accession>Q9BUH8</accession>
<accession>Q9NPU3</accession>
<accession>Q9P282</accession>
<evidence type="ECO:0000250" key="1"/>
<evidence type="ECO:0000250" key="2">
    <source>
        <dbReference type="UniProtKB" id="Q68EF6"/>
    </source>
</evidence>
<evidence type="ECO:0000256" key="3">
    <source>
        <dbReference type="SAM" id="MobiDB-lite"/>
    </source>
</evidence>
<evidence type="ECO:0000305" key="4"/>
<evidence type="ECO:0007744" key="5">
    <source>
    </source>
</evidence>
<evidence type="ECO:0007744" key="6">
    <source>
    </source>
</evidence>
<evidence type="ECO:0007744" key="7">
    <source>
    </source>
</evidence>
<evidence type="ECO:0007744" key="8">
    <source>
    </source>
</evidence>
<evidence type="ECO:0007744" key="9">
    <source>
    </source>
</evidence>
<evidence type="ECO:0007744" key="10">
    <source>
    </source>
</evidence>
<evidence type="ECO:0007744" key="11">
    <source>
    </source>
</evidence>
<evidence type="ECO:0007744" key="12">
    <source>
    </source>
</evidence>
<gene>
    <name type="primary">BEGAIN</name>
    <name type="synonym">KIAA1446</name>
</gene>